<reference key="1">
    <citation type="journal article" date="2005" name="Nature">
        <title>Genome sequencing and analysis of Aspergillus oryzae.</title>
        <authorList>
            <person name="Machida M."/>
            <person name="Asai K."/>
            <person name="Sano M."/>
            <person name="Tanaka T."/>
            <person name="Kumagai T."/>
            <person name="Terai G."/>
            <person name="Kusumoto K."/>
            <person name="Arima T."/>
            <person name="Akita O."/>
            <person name="Kashiwagi Y."/>
            <person name="Abe K."/>
            <person name="Gomi K."/>
            <person name="Horiuchi H."/>
            <person name="Kitamoto K."/>
            <person name="Kobayashi T."/>
            <person name="Takeuchi M."/>
            <person name="Denning D.W."/>
            <person name="Galagan J.E."/>
            <person name="Nierman W.C."/>
            <person name="Yu J."/>
            <person name="Archer D.B."/>
            <person name="Bennett J.W."/>
            <person name="Bhatnagar D."/>
            <person name="Cleveland T.E."/>
            <person name="Fedorova N.D."/>
            <person name="Gotoh O."/>
            <person name="Horikawa H."/>
            <person name="Hosoyama A."/>
            <person name="Ichinomiya M."/>
            <person name="Igarashi R."/>
            <person name="Iwashita K."/>
            <person name="Juvvadi P.R."/>
            <person name="Kato M."/>
            <person name="Kato Y."/>
            <person name="Kin T."/>
            <person name="Kokubun A."/>
            <person name="Maeda H."/>
            <person name="Maeyama N."/>
            <person name="Maruyama J."/>
            <person name="Nagasaki H."/>
            <person name="Nakajima T."/>
            <person name="Oda K."/>
            <person name="Okada K."/>
            <person name="Paulsen I."/>
            <person name="Sakamoto K."/>
            <person name="Sawano T."/>
            <person name="Takahashi M."/>
            <person name="Takase K."/>
            <person name="Terabayashi Y."/>
            <person name="Wortman J.R."/>
            <person name="Yamada O."/>
            <person name="Yamagata Y."/>
            <person name="Anazawa H."/>
            <person name="Hata Y."/>
            <person name="Koide Y."/>
            <person name="Komori T."/>
            <person name="Koyama Y."/>
            <person name="Minetoki T."/>
            <person name="Suharnan S."/>
            <person name="Tanaka A."/>
            <person name="Isono K."/>
            <person name="Kuhara S."/>
            <person name="Ogasawara N."/>
            <person name="Kikuchi H."/>
        </authorList>
    </citation>
    <scope>NUCLEOTIDE SEQUENCE [LARGE SCALE GENOMIC DNA]</scope>
    <source>
        <strain>ATCC 42149 / RIB 40</strain>
    </source>
</reference>
<keyword id="KW-0067">ATP-binding</keyword>
<keyword id="KW-0227">DNA damage</keyword>
<keyword id="KW-0233">DNA recombination</keyword>
<keyword id="KW-0234">DNA repair</keyword>
<keyword id="KW-0436">Ligase</keyword>
<keyword id="KW-0460">Magnesium</keyword>
<keyword id="KW-0479">Metal-binding</keyword>
<keyword id="KW-0547">Nucleotide-binding</keyword>
<keyword id="KW-0539">Nucleus</keyword>
<keyword id="KW-1185">Reference proteome</keyword>
<keyword id="KW-0677">Repeat</keyword>
<gene>
    <name type="primary">lig4</name>
    <name type="ORF">AO090120000322</name>
</gene>
<organism>
    <name type="scientific">Aspergillus oryzae (strain ATCC 42149 / RIB 40)</name>
    <name type="common">Yellow koji mold</name>
    <dbReference type="NCBI Taxonomy" id="510516"/>
    <lineage>
        <taxon>Eukaryota</taxon>
        <taxon>Fungi</taxon>
        <taxon>Dikarya</taxon>
        <taxon>Ascomycota</taxon>
        <taxon>Pezizomycotina</taxon>
        <taxon>Eurotiomycetes</taxon>
        <taxon>Eurotiomycetidae</taxon>
        <taxon>Eurotiales</taxon>
        <taxon>Aspergillaceae</taxon>
        <taxon>Aspergillus</taxon>
        <taxon>Aspergillus subgen. Circumdati</taxon>
    </lineage>
</organism>
<protein>
    <recommendedName>
        <fullName>DNA ligase 4</fullName>
        <ecNumber evidence="2">6.5.1.1</ecNumber>
    </recommendedName>
    <alternativeName>
        <fullName>DNA ligase IV</fullName>
    </alternativeName>
    <alternativeName>
        <fullName>Polydeoxyribonucleotide synthase [ATP] 4</fullName>
    </alternativeName>
</protein>
<proteinExistence type="inferred from homology"/>
<sequence>MDSDDDYNGPADTNPRLEDEESDLDEKYPNRPRNHSTTLPFHVLFQTLFYPLSEIKKKPAGPARKKVGPHGLSSVNLTPLEKRRDIIDRFISRWRKEVGDDIYPAFRLILPDKDRDRAMYGMKEKAIGKLLIRIMKIDKNSEDALNLLNWKLPGQTTTSSMAGDFAGRCFGVLSKRPMRTEVGDMTIEEVNEKLDHLSAASKENQQLPILTEFYRRMNPEELMWLIRIILRQMKVGATERTFFDVFHPDAENLYSISSSLRRVCWELHDPNIRLEAEDRGITLMQCFQPQLAQFQMHSLDRMISRMRLTEDDPVFWIEEKLDGERMQLHMDSNDSVPGGRTFRFWSRKAKDYTYLYGNGIQDENGALTRYLSDAFADGVESLILDGEMITWDTEQDAIAPFGTLKTAALSEQRNPYSSTTRPLFRIFDILYLNGRDLTRYTLRDRRNALQKSIKPVYRRFEIHPYEEATGKTEIEEALRRVVEEASEGLVLKNPRSPYRLNERHDDWMKVKPEYMTEFGESLDVVVIGGYYGSGHRGGGLSSFLCGLRVDDAHSSQGMVASKCYSFCKVGGGFTAADYANIRHHTDGKWHEWKSRKPPTTYIELAGGDAQYERPDMWIKPEDSVVLCVKAASVAVSDQFRIGLTLRFPRFKKLRMDKDWKSALSVQEFLDLKANAERERKEKEFNVDNSRKKRAKRDNKKPLAIVGYSAEAEAQYTGPSGNIFEGLNFYITTDSNTPVKKSKAELEQLVKANGGKFFQTSNAAPSTICIADRRTVKAASLQKSGNVNIIRPSWILDCIRQSEIDAGLPDSLLPLEPRHVFFATQDKKEEIAASVDRFNDSYARNTTNDELKEILKQMSKDHHFHASQNPKIVRKLNERIQEKVNAGWEMPSGWLFKGLTILFPQNDKVDDAEVDETSQTHQQYRLNLARNTVRFAGANVVDSKSSSVTHIVVAPGSSSSDVSSIRKSHSAKPGKKVPHLVTAEWIEECWKQRTLLGEEGFQPSRGT</sequence>
<accession>Q2U6A1</accession>
<dbReference type="EC" id="6.5.1.1" evidence="2"/>
<dbReference type="EMBL" id="BA000053">
    <property type="protein sequence ID" value="BAE62914.1"/>
    <property type="molecule type" value="Genomic_DNA"/>
</dbReference>
<dbReference type="SMR" id="Q2U6A1"/>
<dbReference type="STRING" id="510516.Q2U6A1"/>
<dbReference type="EnsemblFungi" id="BAE62914">
    <property type="protein sequence ID" value="BAE62914"/>
    <property type="gene ID" value="AO090120000322"/>
</dbReference>
<dbReference type="VEuPathDB" id="FungiDB:AO090120000322"/>
<dbReference type="HOGENOM" id="CLU_004844_1_1_1"/>
<dbReference type="OMA" id="EGIMIKH"/>
<dbReference type="Proteomes" id="UP000006564">
    <property type="component" value="Chromosome 5"/>
</dbReference>
<dbReference type="GO" id="GO:0000785">
    <property type="term" value="C:chromatin"/>
    <property type="evidence" value="ECO:0007669"/>
    <property type="project" value="EnsemblFungi"/>
</dbReference>
<dbReference type="GO" id="GO:0032807">
    <property type="term" value="C:DNA ligase IV complex"/>
    <property type="evidence" value="ECO:0007669"/>
    <property type="project" value="EnsemblFungi"/>
</dbReference>
<dbReference type="GO" id="GO:0005730">
    <property type="term" value="C:nucleolus"/>
    <property type="evidence" value="ECO:0007669"/>
    <property type="project" value="EnsemblFungi"/>
</dbReference>
<dbReference type="GO" id="GO:0005524">
    <property type="term" value="F:ATP binding"/>
    <property type="evidence" value="ECO:0007669"/>
    <property type="project" value="UniProtKB-KW"/>
</dbReference>
<dbReference type="GO" id="GO:0003677">
    <property type="term" value="F:DNA binding"/>
    <property type="evidence" value="ECO:0007669"/>
    <property type="project" value="InterPro"/>
</dbReference>
<dbReference type="GO" id="GO:0003910">
    <property type="term" value="F:DNA ligase (ATP) activity"/>
    <property type="evidence" value="ECO:0000250"/>
    <property type="project" value="UniProtKB"/>
</dbReference>
<dbReference type="GO" id="GO:0046872">
    <property type="term" value="F:metal ion binding"/>
    <property type="evidence" value="ECO:0007669"/>
    <property type="project" value="UniProtKB-KW"/>
</dbReference>
<dbReference type="GO" id="GO:0071897">
    <property type="term" value="P:DNA biosynthetic process"/>
    <property type="evidence" value="ECO:0007669"/>
    <property type="project" value="InterPro"/>
</dbReference>
<dbReference type="GO" id="GO:0006310">
    <property type="term" value="P:DNA recombination"/>
    <property type="evidence" value="ECO:0000315"/>
    <property type="project" value="AspGD"/>
</dbReference>
<dbReference type="GO" id="GO:0097680">
    <property type="term" value="P:double-strand break repair via classical nonhomologous end joining"/>
    <property type="evidence" value="ECO:0000250"/>
    <property type="project" value="UniProtKB"/>
</dbReference>
<dbReference type="GO" id="GO:0006297">
    <property type="term" value="P:nucleotide-excision repair, DNA gap filling"/>
    <property type="evidence" value="ECO:0007669"/>
    <property type="project" value="TreeGrafter"/>
</dbReference>
<dbReference type="CDD" id="cd07903">
    <property type="entry name" value="Adenylation_DNA_ligase_IV"/>
    <property type="match status" value="1"/>
</dbReference>
<dbReference type="CDD" id="cd17722">
    <property type="entry name" value="BRCT_DNA_ligase_IV_rpt1"/>
    <property type="match status" value="1"/>
</dbReference>
<dbReference type="CDD" id="cd07968">
    <property type="entry name" value="OBF_DNA_ligase_IV"/>
    <property type="match status" value="1"/>
</dbReference>
<dbReference type="FunFam" id="2.40.50.140:FF:000234">
    <property type="entry name" value="DNA ligase"/>
    <property type="match status" value="1"/>
</dbReference>
<dbReference type="FunFam" id="3.30.470.30:FF:000013">
    <property type="entry name" value="DNA ligase"/>
    <property type="match status" value="1"/>
</dbReference>
<dbReference type="FunFam" id="3.40.50.10190:FF:000084">
    <property type="entry name" value="DNA ligase"/>
    <property type="match status" value="1"/>
</dbReference>
<dbReference type="FunFam" id="3.40.50.10190:FF:000114">
    <property type="entry name" value="DNA ligase"/>
    <property type="match status" value="1"/>
</dbReference>
<dbReference type="FunFam" id="1.10.3260.10:FF:000008">
    <property type="entry name" value="DNA ligase 4"/>
    <property type="match status" value="1"/>
</dbReference>
<dbReference type="Gene3D" id="3.40.50.10190">
    <property type="entry name" value="BRCT domain"/>
    <property type="match status" value="2"/>
</dbReference>
<dbReference type="Gene3D" id="1.10.3260.10">
    <property type="entry name" value="DNA ligase, ATP-dependent, N-terminal domain"/>
    <property type="match status" value="1"/>
</dbReference>
<dbReference type="Gene3D" id="3.30.470.30">
    <property type="entry name" value="DNA ligase/mRNA capping enzyme"/>
    <property type="match status" value="1"/>
</dbReference>
<dbReference type="Gene3D" id="2.40.50.140">
    <property type="entry name" value="Nucleic acid-binding proteins"/>
    <property type="match status" value="1"/>
</dbReference>
<dbReference type="InterPro" id="IPR044125">
    <property type="entry name" value="Adenylation_DNA_ligase_IV"/>
</dbReference>
<dbReference type="InterPro" id="IPR001357">
    <property type="entry name" value="BRCT_dom"/>
</dbReference>
<dbReference type="InterPro" id="IPR036420">
    <property type="entry name" value="BRCT_dom_sf"/>
</dbReference>
<dbReference type="InterPro" id="IPR000977">
    <property type="entry name" value="DNA_ligase_ATP-dep"/>
</dbReference>
<dbReference type="InterPro" id="IPR012309">
    <property type="entry name" value="DNA_ligase_ATP-dep_C"/>
</dbReference>
<dbReference type="InterPro" id="IPR012310">
    <property type="entry name" value="DNA_ligase_ATP-dep_cent"/>
</dbReference>
<dbReference type="InterPro" id="IPR016059">
    <property type="entry name" value="DNA_ligase_ATP-dep_CS"/>
</dbReference>
<dbReference type="InterPro" id="IPR012308">
    <property type="entry name" value="DNA_ligase_ATP-dep_N"/>
</dbReference>
<dbReference type="InterPro" id="IPR036599">
    <property type="entry name" value="DNA_ligase_N_sf"/>
</dbReference>
<dbReference type="InterPro" id="IPR029710">
    <property type="entry name" value="LIG4"/>
</dbReference>
<dbReference type="InterPro" id="IPR012340">
    <property type="entry name" value="NA-bd_OB-fold"/>
</dbReference>
<dbReference type="NCBIfam" id="TIGR00574">
    <property type="entry name" value="dnl1"/>
    <property type="match status" value="1"/>
</dbReference>
<dbReference type="PANTHER" id="PTHR45997">
    <property type="entry name" value="DNA LIGASE 4"/>
    <property type="match status" value="1"/>
</dbReference>
<dbReference type="PANTHER" id="PTHR45997:SF1">
    <property type="entry name" value="DNA LIGASE 4"/>
    <property type="match status" value="1"/>
</dbReference>
<dbReference type="Pfam" id="PF16589">
    <property type="entry name" value="BRCT_2"/>
    <property type="match status" value="1"/>
</dbReference>
<dbReference type="Pfam" id="PF04679">
    <property type="entry name" value="DNA_ligase_A_C"/>
    <property type="match status" value="1"/>
</dbReference>
<dbReference type="Pfam" id="PF01068">
    <property type="entry name" value="DNA_ligase_A_M"/>
    <property type="match status" value="1"/>
</dbReference>
<dbReference type="Pfam" id="PF04675">
    <property type="entry name" value="DNA_ligase_A_N"/>
    <property type="match status" value="1"/>
</dbReference>
<dbReference type="SMART" id="SM00292">
    <property type="entry name" value="BRCT"/>
    <property type="match status" value="2"/>
</dbReference>
<dbReference type="SUPFAM" id="SSF117018">
    <property type="entry name" value="ATP-dependent DNA ligase DNA-binding domain"/>
    <property type="match status" value="1"/>
</dbReference>
<dbReference type="SUPFAM" id="SSF52113">
    <property type="entry name" value="BRCT domain"/>
    <property type="match status" value="2"/>
</dbReference>
<dbReference type="SUPFAM" id="SSF56091">
    <property type="entry name" value="DNA ligase/mRNA capping enzyme, catalytic domain"/>
    <property type="match status" value="1"/>
</dbReference>
<dbReference type="SUPFAM" id="SSF50249">
    <property type="entry name" value="Nucleic acid-binding proteins"/>
    <property type="match status" value="1"/>
</dbReference>
<dbReference type="PROSITE" id="PS50172">
    <property type="entry name" value="BRCT"/>
    <property type="match status" value="2"/>
</dbReference>
<dbReference type="PROSITE" id="PS00697">
    <property type="entry name" value="DNA_LIGASE_A1"/>
    <property type="match status" value="1"/>
</dbReference>
<dbReference type="PROSITE" id="PS50160">
    <property type="entry name" value="DNA_LIGASE_A3"/>
    <property type="match status" value="1"/>
</dbReference>
<comment type="function">
    <text evidence="2">DNA ligase involved in DNA non-homologous end joining (NHEJ); required for double-strand break (DSB) repair.</text>
</comment>
<comment type="catalytic activity">
    <reaction evidence="5">
        <text>ATP + (deoxyribonucleotide)n-3'-hydroxyl + 5'-phospho-(deoxyribonucleotide)m = (deoxyribonucleotide)n+m + AMP + diphosphate.</text>
        <dbReference type="EC" id="6.5.1.1"/>
    </reaction>
</comment>
<comment type="cofactor">
    <cofactor evidence="1">
        <name>Mg(2+)</name>
        <dbReference type="ChEBI" id="CHEBI:18420"/>
    </cofactor>
</comment>
<comment type="subcellular location">
    <subcellularLocation>
        <location evidence="2">Nucleus</location>
    </subcellularLocation>
</comment>
<comment type="similarity">
    <text evidence="7">Belongs to the ATP-dependent DNA ligase family.</text>
</comment>
<evidence type="ECO:0000250" key="1">
    <source>
        <dbReference type="UniProtKB" id="P49917"/>
    </source>
</evidence>
<evidence type="ECO:0000250" key="2">
    <source>
        <dbReference type="UniProtKB" id="Q08387"/>
    </source>
</evidence>
<evidence type="ECO:0000255" key="3"/>
<evidence type="ECO:0000255" key="4">
    <source>
        <dbReference type="PROSITE-ProRule" id="PRU00033"/>
    </source>
</evidence>
<evidence type="ECO:0000255" key="5">
    <source>
        <dbReference type="PROSITE-ProRule" id="PRU10135"/>
    </source>
</evidence>
<evidence type="ECO:0000256" key="6">
    <source>
        <dbReference type="SAM" id="MobiDB-lite"/>
    </source>
</evidence>
<evidence type="ECO:0000305" key="7"/>
<name>DNLI4_ASPOR</name>
<feature type="chain" id="PRO_0000278376" description="DNA ligase 4">
    <location>
        <begin position="1"/>
        <end position="1006"/>
    </location>
</feature>
<feature type="domain" description="BRCT 1" evidence="4">
    <location>
        <begin position="718"/>
        <end position="811"/>
    </location>
</feature>
<feature type="domain" description="BRCT 2" evidence="4">
    <location>
        <begin position="890"/>
        <end position="1002"/>
    </location>
</feature>
<feature type="region of interest" description="Disordered" evidence="6">
    <location>
        <begin position="1"/>
        <end position="36"/>
    </location>
</feature>
<feature type="active site" description="N6-AMP-lysine intermediate" evidence="5">
    <location>
        <position position="320"/>
    </location>
</feature>
<feature type="binding site" evidence="1">
    <location>
        <position position="318"/>
    </location>
    <ligand>
        <name>ATP</name>
        <dbReference type="ChEBI" id="CHEBI:30616"/>
    </ligand>
</feature>
<feature type="binding site" evidence="1">
    <location>
        <position position="320"/>
    </location>
    <ligand>
        <name>ATP</name>
        <dbReference type="ChEBI" id="CHEBI:30616"/>
    </ligand>
</feature>
<feature type="binding site" evidence="1">
    <location>
        <position position="321"/>
    </location>
    <ligand>
        <name>ATP</name>
        <dbReference type="ChEBI" id="CHEBI:30616"/>
    </ligand>
</feature>
<feature type="binding site" evidence="1">
    <location>
        <position position="325"/>
    </location>
    <ligand>
        <name>ATP</name>
        <dbReference type="ChEBI" id="CHEBI:30616"/>
    </ligand>
</feature>
<feature type="binding site" evidence="1">
    <location>
        <position position="387"/>
    </location>
    <ligand>
        <name>ATP</name>
        <dbReference type="ChEBI" id="CHEBI:30616"/>
    </ligand>
</feature>
<feature type="binding site" evidence="3">
    <location>
        <position position="387"/>
    </location>
    <ligand>
        <name>Mg(2+)</name>
        <dbReference type="ChEBI" id="CHEBI:18420"/>
        <label>1</label>
    </ligand>
</feature>
<feature type="binding site" evidence="1">
    <location>
        <position position="427"/>
    </location>
    <ligand>
        <name>ATP</name>
        <dbReference type="ChEBI" id="CHEBI:30616"/>
    </ligand>
</feature>
<feature type="binding site" evidence="1">
    <location>
        <position position="487"/>
    </location>
    <ligand>
        <name>ATP</name>
        <dbReference type="ChEBI" id="CHEBI:30616"/>
    </ligand>
</feature>
<feature type="binding site" evidence="3">
    <location>
        <position position="487"/>
    </location>
    <ligand>
        <name>Mg(2+)</name>
        <dbReference type="ChEBI" id="CHEBI:18420"/>
        <label>2</label>
    </ligand>
</feature>
<feature type="binding site" evidence="1">
    <location>
        <position position="492"/>
    </location>
    <ligand>
        <name>ATP</name>
        <dbReference type="ChEBI" id="CHEBI:30616"/>
    </ligand>
</feature>
<feature type="binding site" evidence="1">
    <location>
        <position position="509"/>
    </location>
    <ligand>
        <name>ATP</name>
        <dbReference type="ChEBI" id="CHEBI:30616"/>
    </ligand>
</feature>
<feature type="binding site" evidence="1">
    <location>
        <position position="511"/>
    </location>
    <ligand>
        <name>ATP</name>
        <dbReference type="ChEBI" id="CHEBI:30616"/>
    </ligand>
</feature>